<proteinExistence type="evidence at transcript level"/>
<reference key="1">
    <citation type="journal article" date="2013" name="Nature">
        <title>The zebrafish reference genome sequence and its relationship to the human genome.</title>
        <authorList>
            <person name="Howe K."/>
            <person name="Clark M.D."/>
            <person name="Torroja C.F."/>
            <person name="Torrance J."/>
            <person name="Berthelot C."/>
            <person name="Muffato M."/>
            <person name="Collins J.E."/>
            <person name="Humphray S."/>
            <person name="McLaren K."/>
            <person name="Matthews L."/>
            <person name="McLaren S."/>
            <person name="Sealy I."/>
            <person name="Caccamo M."/>
            <person name="Churcher C."/>
            <person name="Scott C."/>
            <person name="Barrett J.C."/>
            <person name="Koch R."/>
            <person name="Rauch G.J."/>
            <person name="White S."/>
            <person name="Chow W."/>
            <person name="Kilian B."/>
            <person name="Quintais L.T."/>
            <person name="Guerra-Assuncao J.A."/>
            <person name="Zhou Y."/>
            <person name="Gu Y."/>
            <person name="Yen J."/>
            <person name="Vogel J.H."/>
            <person name="Eyre T."/>
            <person name="Redmond S."/>
            <person name="Banerjee R."/>
            <person name="Chi J."/>
            <person name="Fu B."/>
            <person name="Langley E."/>
            <person name="Maguire S.F."/>
            <person name="Laird G.K."/>
            <person name="Lloyd D."/>
            <person name="Kenyon E."/>
            <person name="Donaldson S."/>
            <person name="Sehra H."/>
            <person name="Almeida-King J."/>
            <person name="Loveland J."/>
            <person name="Trevanion S."/>
            <person name="Jones M."/>
            <person name="Quail M."/>
            <person name="Willey D."/>
            <person name="Hunt A."/>
            <person name="Burton J."/>
            <person name="Sims S."/>
            <person name="McLay K."/>
            <person name="Plumb B."/>
            <person name="Davis J."/>
            <person name="Clee C."/>
            <person name="Oliver K."/>
            <person name="Clark R."/>
            <person name="Riddle C."/>
            <person name="Elliot D."/>
            <person name="Threadgold G."/>
            <person name="Harden G."/>
            <person name="Ware D."/>
            <person name="Begum S."/>
            <person name="Mortimore B."/>
            <person name="Kerry G."/>
            <person name="Heath P."/>
            <person name="Phillimore B."/>
            <person name="Tracey A."/>
            <person name="Corby N."/>
            <person name="Dunn M."/>
            <person name="Johnson C."/>
            <person name="Wood J."/>
            <person name="Clark S."/>
            <person name="Pelan S."/>
            <person name="Griffiths G."/>
            <person name="Smith M."/>
            <person name="Glithero R."/>
            <person name="Howden P."/>
            <person name="Barker N."/>
            <person name="Lloyd C."/>
            <person name="Stevens C."/>
            <person name="Harley J."/>
            <person name="Holt K."/>
            <person name="Panagiotidis G."/>
            <person name="Lovell J."/>
            <person name="Beasley H."/>
            <person name="Henderson C."/>
            <person name="Gordon D."/>
            <person name="Auger K."/>
            <person name="Wright D."/>
            <person name="Collins J."/>
            <person name="Raisen C."/>
            <person name="Dyer L."/>
            <person name="Leung K."/>
            <person name="Robertson L."/>
            <person name="Ambridge K."/>
            <person name="Leongamornlert D."/>
            <person name="McGuire S."/>
            <person name="Gilderthorp R."/>
            <person name="Griffiths C."/>
            <person name="Manthravadi D."/>
            <person name="Nichol S."/>
            <person name="Barker G."/>
            <person name="Whitehead S."/>
            <person name="Kay M."/>
            <person name="Brown J."/>
            <person name="Murnane C."/>
            <person name="Gray E."/>
            <person name="Humphries M."/>
            <person name="Sycamore N."/>
            <person name="Barker D."/>
            <person name="Saunders D."/>
            <person name="Wallis J."/>
            <person name="Babbage A."/>
            <person name="Hammond S."/>
            <person name="Mashreghi-Mohammadi M."/>
            <person name="Barr L."/>
            <person name="Martin S."/>
            <person name="Wray P."/>
            <person name="Ellington A."/>
            <person name="Matthews N."/>
            <person name="Ellwood M."/>
            <person name="Woodmansey R."/>
            <person name="Clark G."/>
            <person name="Cooper J."/>
            <person name="Tromans A."/>
            <person name="Grafham D."/>
            <person name="Skuce C."/>
            <person name="Pandian R."/>
            <person name="Andrews R."/>
            <person name="Harrison E."/>
            <person name="Kimberley A."/>
            <person name="Garnett J."/>
            <person name="Fosker N."/>
            <person name="Hall R."/>
            <person name="Garner P."/>
            <person name="Kelly D."/>
            <person name="Bird C."/>
            <person name="Palmer S."/>
            <person name="Gehring I."/>
            <person name="Berger A."/>
            <person name="Dooley C.M."/>
            <person name="Ersan-Urun Z."/>
            <person name="Eser C."/>
            <person name="Geiger H."/>
            <person name="Geisler M."/>
            <person name="Karotki L."/>
            <person name="Kirn A."/>
            <person name="Konantz J."/>
            <person name="Konantz M."/>
            <person name="Oberlander M."/>
            <person name="Rudolph-Geiger S."/>
            <person name="Teucke M."/>
            <person name="Lanz C."/>
            <person name="Raddatz G."/>
            <person name="Osoegawa K."/>
            <person name="Zhu B."/>
            <person name="Rapp A."/>
            <person name="Widaa S."/>
            <person name="Langford C."/>
            <person name="Yang F."/>
            <person name="Schuster S.C."/>
            <person name="Carter N.P."/>
            <person name="Harrow J."/>
            <person name="Ning Z."/>
            <person name="Herrero J."/>
            <person name="Searle S.M."/>
            <person name="Enright A."/>
            <person name="Geisler R."/>
            <person name="Plasterk R.H."/>
            <person name="Lee C."/>
            <person name="Westerfield M."/>
            <person name="de Jong P.J."/>
            <person name="Zon L.I."/>
            <person name="Postlethwait J.H."/>
            <person name="Nusslein-Volhard C."/>
            <person name="Hubbard T.J."/>
            <person name="Roest Crollius H."/>
            <person name="Rogers J."/>
            <person name="Stemple D.L."/>
        </authorList>
    </citation>
    <scope>NUCLEOTIDE SEQUENCE [LARGE SCALE GENOMIC DNA]</scope>
    <source>
        <strain>Tuebingen</strain>
    </source>
</reference>
<reference evidence="6" key="2">
    <citation type="submission" date="2005-03" db="EMBL/GenBank/DDBJ databases">
        <authorList>
            <consortium name="NIH - Zebrafish Gene Collection (ZGC) project"/>
        </authorList>
    </citation>
    <scope>NUCLEOTIDE SEQUENCE [LARGE SCALE MRNA]</scope>
    <source>
        <tissue evidence="5">Embryo</tissue>
    </source>
</reference>
<name>ERLN1_DANRE</name>
<sequence length="342" mass="38319">MAHVGAVVAAMAGLMAILLHSSIHKIEEGHLAVYYRGGALLTSPNGPGYHIMLPFITSYRSVQTTLQTDEIKNVPCGTSGGVMIYFDRIEVVNMLIPTSVVDIVRNYTADYDKTLIFNKIHHELNQFCSVHTLQEVYIELFDIIDENLKTALQKDLNCMAPGLTIQAVRVTKPKIPEAIRRNYELMEAEKTRLLITVQTQKVVEKEAETERKKAIIEAQKVAQVAEIQFQQKVMEKETEKKISEIEDAAFLAREKARADAEYYTAAKFAEANTLKLTPEYLQLMKYQAIAANSKIYFGQDIPNMFVDSSASRPAAGESEQLESLSMRESLKKASKPKASEGH</sequence>
<dbReference type="EMBL" id="AL929005">
    <property type="status" value="NOT_ANNOTATED_CDS"/>
    <property type="molecule type" value="Genomic_DNA"/>
</dbReference>
<dbReference type="EMBL" id="BC091924">
    <property type="protein sequence ID" value="AAH91924.1"/>
    <property type="molecule type" value="mRNA"/>
</dbReference>
<dbReference type="RefSeq" id="NP_001014325.1">
    <property type="nucleotide sequence ID" value="NM_001014303.1"/>
</dbReference>
<dbReference type="RefSeq" id="XP_005156890.1">
    <property type="nucleotide sequence ID" value="XM_005156833.5"/>
</dbReference>
<dbReference type="RefSeq" id="XP_005156891.1">
    <property type="nucleotide sequence ID" value="XM_005156834.5"/>
</dbReference>
<dbReference type="SMR" id="Q58EG2"/>
<dbReference type="FunCoup" id="Q58EG2">
    <property type="interactions" value="600"/>
</dbReference>
<dbReference type="IntAct" id="Q58EG2">
    <property type="interactions" value="1"/>
</dbReference>
<dbReference type="MINT" id="Q58EG2"/>
<dbReference type="STRING" id="7955.ENSDARP00000015815"/>
<dbReference type="GlyCosmos" id="Q58EG2">
    <property type="glycosylation" value="1 site, No reported glycans"/>
</dbReference>
<dbReference type="PaxDb" id="7955-ENSDARP00000015815"/>
<dbReference type="Ensembl" id="ENSDART00000003922">
    <property type="protein sequence ID" value="ENSDARP00000015815"/>
    <property type="gene ID" value="ENSDARG00000021991"/>
</dbReference>
<dbReference type="Ensembl" id="ENSDART00000172156">
    <property type="protein sequence ID" value="ENSDARP00000140094"/>
    <property type="gene ID" value="ENSDARG00000021991"/>
</dbReference>
<dbReference type="GeneID" id="541490"/>
<dbReference type="KEGG" id="dre:541490"/>
<dbReference type="AGR" id="ZFIN:ZDB-GENE-050327-13"/>
<dbReference type="CTD" id="10613"/>
<dbReference type="ZFIN" id="ZDB-GENE-050327-13">
    <property type="gene designation" value="erlin1"/>
</dbReference>
<dbReference type="eggNOG" id="KOG2962">
    <property type="taxonomic scope" value="Eukaryota"/>
</dbReference>
<dbReference type="InParanoid" id="Q58EG2"/>
<dbReference type="OMA" id="HIMIPIL"/>
<dbReference type="OrthoDB" id="77368at2759"/>
<dbReference type="PhylomeDB" id="Q58EG2"/>
<dbReference type="TreeFam" id="TF313059"/>
<dbReference type="Reactome" id="R-DRE-382556">
    <property type="pathway name" value="ABC-family proteins mediated transport"/>
</dbReference>
<dbReference type="PRO" id="PR:Q58EG2"/>
<dbReference type="Proteomes" id="UP000000437">
    <property type="component" value="Chromosome 13"/>
</dbReference>
<dbReference type="Bgee" id="ENSDARG00000021991">
    <property type="expression patterns" value="Expressed in early embryo and 27 other cell types or tissues"/>
</dbReference>
<dbReference type="ExpressionAtlas" id="Q58EG2">
    <property type="expression patterns" value="baseline and differential"/>
</dbReference>
<dbReference type="GO" id="GO:0005789">
    <property type="term" value="C:endoplasmic reticulum membrane"/>
    <property type="evidence" value="ECO:0000318"/>
    <property type="project" value="GO_Central"/>
</dbReference>
<dbReference type="GO" id="GO:0015485">
    <property type="term" value="F:cholesterol binding"/>
    <property type="evidence" value="ECO:0000318"/>
    <property type="project" value="GO_Central"/>
</dbReference>
<dbReference type="GO" id="GO:0031625">
    <property type="term" value="F:ubiquitin protein ligase binding"/>
    <property type="evidence" value="ECO:0007669"/>
    <property type="project" value="InterPro"/>
</dbReference>
<dbReference type="GO" id="GO:0008203">
    <property type="term" value="P:cholesterol metabolic process"/>
    <property type="evidence" value="ECO:0007669"/>
    <property type="project" value="UniProtKB-KW"/>
</dbReference>
<dbReference type="GO" id="GO:0032933">
    <property type="term" value="P:SREBP signaling pathway"/>
    <property type="evidence" value="ECO:0000318"/>
    <property type="project" value="GO_Central"/>
</dbReference>
<dbReference type="CDD" id="cd03406">
    <property type="entry name" value="SPFH_like_u3"/>
    <property type="match status" value="1"/>
</dbReference>
<dbReference type="FunFam" id="3.30.479.30:FF:000009">
    <property type="entry name" value="Erlin-2 isoform 1"/>
    <property type="match status" value="1"/>
</dbReference>
<dbReference type="Gene3D" id="3.30.479.30">
    <property type="entry name" value="Band 7 domain"/>
    <property type="match status" value="1"/>
</dbReference>
<dbReference type="InterPro" id="IPR001107">
    <property type="entry name" value="Band_7"/>
</dbReference>
<dbReference type="InterPro" id="IPR036013">
    <property type="entry name" value="Band_7/SPFH_dom_sf"/>
</dbReference>
<dbReference type="InterPro" id="IPR033294">
    <property type="entry name" value="Erlin1/2"/>
</dbReference>
<dbReference type="PANTHER" id="PTHR15351">
    <property type="entry name" value="ERLIN (ER LIPID RAFT ASSOCIATED PROTEIN) HOMOLOG"/>
    <property type="match status" value="1"/>
</dbReference>
<dbReference type="PANTHER" id="PTHR15351:SF2">
    <property type="entry name" value="ERLIN-1"/>
    <property type="match status" value="1"/>
</dbReference>
<dbReference type="Pfam" id="PF01145">
    <property type="entry name" value="Band_7"/>
    <property type="match status" value="1"/>
</dbReference>
<dbReference type="SMART" id="SM00244">
    <property type="entry name" value="PHB"/>
    <property type="match status" value="1"/>
</dbReference>
<gene>
    <name evidence="7" type="primary">erlin1</name>
    <name type="ORF">si:ch211-223p8.2</name>
    <name type="ORF">zgc:110547</name>
</gene>
<organism>
    <name type="scientific">Danio rerio</name>
    <name type="common">Zebrafish</name>
    <name type="synonym">Brachydanio rerio</name>
    <dbReference type="NCBI Taxonomy" id="7955"/>
    <lineage>
        <taxon>Eukaryota</taxon>
        <taxon>Metazoa</taxon>
        <taxon>Chordata</taxon>
        <taxon>Craniata</taxon>
        <taxon>Vertebrata</taxon>
        <taxon>Euteleostomi</taxon>
        <taxon>Actinopterygii</taxon>
        <taxon>Neopterygii</taxon>
        <taxon>Teleostei</taxon>
        <taxon>Ostariophysi</taxon>
        <taxon>Cypriniformes</taxon>
        <taxon>Danionidae</taxon>
        <taxon>Danioninae</taxon>
        <taxon>Danio</taxon>
    </lineage>
</organism>
<feature type="chain" id="PRO_0000378625" description="Erlin-1">
    <location>
        <begin position="1"/>
        <end position="342"/>
    </location>
</feature>
<feature type="topological domain" description="Cytoplasmic" evidence="3">
    <location>
        <begin position="1"/>
        <end position="6"/>
    </location>
</feature>
<feature type="transmembrane region" description="Helical" evidence="3">
    <location>
        <begin position="7"/>
        <end position="23"/>
    </location>
</feature>
<feature type="topological domain" description="Lumenal" evidence="3">
    <location>
        <begin position="24"/>
        <end position="342"/>
    </location>
</feature>
<feature type="region of interest" description="Disordered" evidence="4">
    <location>
        <begin position="308"/>
        <end position="342"/>
    </location>
</feature>
<feature type="glycosylation site" description="N-linked (GlcNAc...) asparagine" evidence="3">
    <location>
        <position position="106"/>
    </location>
</feature>
<protein>
    <recommendedName>
        <fullName evidence="6">Erlin-1</fullName>
    </recommendedName>
    <alternativeName>
        <fullName evidence="6">Endoplasmic reticulum lipid raft-associated protein 1</fullName>
    </alternativeName>
</protein>
<keyword id="KW-0153">Cholesterol metabolism</keyword>
<keyword id="KW-0256">Endoplasmic reticulum</keyword>
<keyword id="KW-0325">Glycoprotein</keyword>
<keyword id="KW-0443">Lipid metabolism</keyword>
<keyword id="KW-0446">Lipid-binding</keyword>
<keyword id="KW-0472">Membrane</keyword>
<keyword id="KW-1185">Reference proteome</keyword>
<keyword id="KW-0735">Signal-anchor</keyword>
<keyword id="KW-0753">Steroid metabolism</keyword>
<keyword id="KW-1207">Sterol metabolism</keyword>
<keyword id="KW-0812">Transmembrane</keyword>
<keyword id="KW-1133">Transmembrane helix</keyword>
<accession>Q58EG2</accession>
<evidence type="ECO:0000250" key="1">
    <source>
        <dbReference type="UniProtKB" id="O75477"/>
    </source>
</evidence>
<evidence type="ECO:0000250" key="2">
    <source>
        <dbReference type="UniProtKB" id="O94905"/>
    </source>
</evidence>
<evidence type="ECO:0000255" key="3"/>
<evidence type="ECO:0000256" key="4">
    <source>
        <dbReference type="SAM" id="MobiDB-lite"/>
    </source>
</evidence>
<evidence type="ECO:0000312" key="5">
    <source>
        <dbReference type="EMBL" id="AAH91924.1"/>
    </source>
</evidence>
<evidence type="ECO:0000312" key="6">
    <source>
        <dbReference type="EMBL" id="AL929005"/>
    </source>
</evidence>
<evidence type="ECO:0000312" key="7">
    <source>
        <dbReference type="ZFIN" id="ZDB-GENE-050327-13"/>
    </source>
</evidence>
<comment type="function">
    <text evidence="1">Mediates the endoplasmic reticulum-associated degradation (ERAD) of inositol 1,4,5-trisphosphate receptors (IP3Rs). Involved in regulation of cellular cholesterol homeostasis by regulation the SREBP signaling pathway. Binds cholesterol and may promote ER retention of the SCAP-SREBF complex.</text>
</comment>
<comment type="subcellular location">
    <subcellularLocation>
        <location evidence="2 3">Endoplasmic reticulum membrane</location>
        <topology evidence="2 3">Single-pass type II membrane protein</topology>
    </subcellularLocation>
    <text evidence="2 3">Associated with lipid raft-like domains of the endoplasmic reticulum membrane.</text>
</comment>
<comment type="similarity">
    <text evidence="3">Belongs to the band 7/mec-2 family.</text>
</comment>